<protein>
    <recommendedName>
        <fullName evidence="1">Methylthioribose-1-phosphate isomerase</fullName>
        <shortName evidence="1">M1Pi</shortName>
        <shortName evidence="1">MTR-1-P isomerase</shortName>
        <ecNumber evidence="1">5.3.1.23</ecNumber>
    </recommendedName>
    <alternativeName>
        <fullName evidence="1">S-methyl-5-thioribose-1-phosphate isomerase</fullName>
    </alternativeName>
</protein>
<proteinExistence type="inferred from homology"/>
<gene>
    <name evidence="1" type="primary">mtnA</name>
    <name type="ordered locus">Mchl_0674</name>
</gene>
<sequence>MKIDGRPYRTIFPEADGDAVMVIDQTRLPFAFELKRLTNLDDAAVAIRTMVVRGAPLIGVTAAYGMALAMRQDASEAGIERASATLAATRPTAINLRWALDRMAAVLRRAPESAREALAFTEAAAIADEDVASCRAIGEHGAKILSEIAAKKDGPVNVLTHCNAGWLATVDWGTALAPIYVAHDAGVPVHVFVDETRPRNQGAALTAFELNAHGVPHTVIADNAGGHLMQHGQVDVCIVGSDRTTASGDVCNKIGTYLKALAATDNRIPFYAALPFSTIDWTLSDGVRDIPIEERDAREVTHLTGRTDDGAFATVAVVSPGSPVANPAFDVTPARLVTGIITERGVCDASEDGLAGLYPERRRAA</sequence>
<accession>B7KZ66</accession>
<dbReference type="EC" id="5.3.1.23" evidence="1"/>
<dbReference type="EMBL" id="CP001298">
    <property type="protein sequence ID" value="ACK81596.1"/>
    <property type="molecule type" value="Genomic_DNA"/>
</dbReference>
<dbReference type="RefSeq" id="WP_012605723.1">
    <property type="nucleotide sequence ID" value="NC_011757.1"/>
</dbReference>
<dbReference type="SMR" id="B7KZ66"/>
<dbReference type="KEGG" id="mch:Mchl_0674"/>
<dbReference type="HOGENOM" id="CLU_016218_1_2_5"/>
<dbReference type="UniPathway" id="UPA00904">
    <property type="reaction ID" value="UER00874"/>
</dbReference>
<dbReference type="Proteomes" id="UP000002385">
    <property type="component" value="Chromosome"/>
</dbReference>
<dbReference type="GO" id="GO:0046523">
    <property type="term" value="F:S-methyl-5-thioribose-1-phosphate isomerase activity"/>
    <property type="evidence" value="ECO:0007669"/>
    <property type="project" value="UniProtKB-UniRule"/>
</dbReference>
<dbReference type="GO" id="GO:0019509">
    <property type="term" value="P:L-methionine salvage from methylthioadenosine"/>
    <property type="evidence" value="ECO:0007669"/>
    <property type="project" value="UniProtKB-UniRule"/>
</dbReference>
<dbReference type="FunFam" id="1.20.120.420:FF:000003">
    <property type="entry name" value="Methylthioribose-1-phosphate isomerase"/>
    <property type="match status" value="1"/>
</dbReference>
<dbReference type="FunFam" id="3.40.50.10470:FF:000006">
    <property type="entry name" value="Methylthioribose-1-phosphate isomerase"/>
    <property type="match status" value="1"/>
</dbReference>
<dbReference type="Gene3D" id="1.20.120.420">
    <property type="entry name" value="translation initiation factor eif-2b, domain 1"/>
    <property type="match status" value="1"/>
</dbReference>
<dbReference type="Gene3D" id="3.40.50.10470">
    <property type="entry name" value="Translation initiation factor eif-2b, domain 2"/>
    <property type="match status" value="1"/>
</dbReference>
<dbReference type="HAMAP" id="MF_01678">
    <property type="entry name" value="Salvage_MtnA"/>
    <property type="match status" value="1"/>
</dbReference>
<dbReference type="InterPro" id="IPR000649">
    <property type="entry name" value="IF-2B-related"/>
</dbReference>
<dbReference type="InterPro" id="IPR005251">
    <property type="entry name" value="IF-M1Pi"/>
</dbReference>
<dbReference type="InterPro" id="IPR042529">
    <property type="entry name" value="IF_2B-like_C"/>
</dbReference>
<dbReference type="InterPro" id="IPR011559">
    <property type="entry name" value="Initiation_fac_2B_a/b/d"/>
</dbReference>
<dbReference type="InterPro" id="IPR027363">
    <property type="entry name" value="M1Pi_N"/>
</dbReference>
<dbReference type="InterPro" id="IPR037171">
    <property type="entry name" value="NagB/RpiA_transferase-like"/>
</dbReference>
<dbReference type="NCBIfam" id="TIGR00524">
    <property type="entry name" value="eIF-2B_rel"/>
    <property type="match status" value="1"/>
</dbReference>
<dbReference type="NCBIfam" id="NF004326">
    <property type="entry name" value="PRK05720.1"/>
    <property type="match status" value="1"/>
</dbReference>
<dbReference type="NCBIfam" id="TIGR00512">
    <property type="entry name" value="salvage_mtnA"/>
    <property type="match status" value="1"/>
</dbReference>
<dbReference type="PANTHER" id="PTHR43475">
    <property type="entry name" value="METHYLTHIORIBOSE-1-PHOSPHATE ISOMERASE"/>
    <property type="match status" value="1"/>
</dbReference>
<dbReference type="PANTHER" id="PTHR43475:SF1">
    <property type="entry name" value="METHYLTHIORIBOSE-1-PHOSPHATE ISOMERASE"/>
    <property type="match status" value="1"/>
</dbReference>
<dbReference type="Pfam" id="PF01008">
    <property type="entry name" value="IF-2B"/>
    <property type="match status" value="1"/>
</dbReference>
<dbReference type="SUPFAM" id="SSF100950">
    <property type="entry name" value="NagB/RpiA/CoA transferase-like"/>
    <property type="match status" value="1"/>
</dbReference>
<organism>
    <name type="scientific">Methylorubrum extorquens (strain CM4 / NCIMB 13688)</name>
    <name type="common">Methylobacterium extorquens</name>
    <dbReference type="NCBI Taxonomy" id="440085"/>
    <lineage>
        <taxon>Bacteria</taxon>
        <taxon>Pseudomonadati</taxon>
        <taxon>Pseudomonadota</taxon>
        <taxon>Alphaproteobacteria</taxon>
        <taxon>Hyphomicrobiales</taxon>
        <taxon>Methylobacteriaceae</taxon>
        <taxon>Methylorubrum</taxon>
    </lineage>
</organism>
<reference key="1">
    <citation type="submission" date="2008-12" db="EMBL/GenBank/DDBJ databases">
        <title>Complete sequence of chromosome of Methylobacterium chloromethanicum CM4.</title>
        <authorList>
            <consortium name="US DOE Joint Genome Institute"/>
            <person name="Lucas S."/>
            <person name="Copeland A."/>
            <person name="Lapidus A."/>
            <person name="Glavina del Rio T."/>
            <person name="Dalin E."/>
            <person name="Tice H."/>
            <person name="Bruce D."/>
            <person name="Goodwin L."/>
            <person name="Pitluck S."/>
            <person name="Chertkov O."/>
            <person name="Brettin T."/>
            <person name="Detter J.C."/>
            <person name="Han C."/>
            <person name="Larimer F."/>
            <person name="Land M."/>
            <person name="Hauser L."/>
            <person name="Kyrpides N."/>
            <person name="Mikhailova N."/>
            <person name="Marx C."/>
            <person name="Richardson P."/>
        </authorList>
    </citation>
    <scope>NUCLEOTIDE SEQUENCE [LARGE SCALE GENOMIC DNA]</scope>
    <source>
        <strain>CM4 / NCIMB 13688</strain>
    </source>
</reference>
<name>MTNA_METC4</name>
<keyword id="KW-0028">Amino-acid biosynthesis</keyword>
<keyword id="KW-0413">Isomerase</keyword>
<keyword id="KW-0486">Methionine biosynthesis</keyword>
<comment type="function">
    <text evidence="1">Catalyzes the interconversion of methylthioribose-1-phosphate (MTR-1-P) into methylthioribulose-1-phosphate (MTRu-1-P).</text>
</comment>
<comment type="catalytic activity">
    <reaction evidence="1">
        <text>5-(methylsulfanyl)-alpha-D-ribose 1-phosphate = 5-(methylsulfanyl)-D-ribulose 1-phosphate</text>
        <dbReference type="Rhea" id="RHEA:19989"/>
        <dbReference type="ChEBI" id="CHEBI:58533"/>
        <dbReference type="ChEBI" id="CHEBI:58548"/>
        <dbReference type="EC" id="5.3.1.23"/>
    </reaction>
</comment>
<comment type="pathway">
    <text evidence="1">Amino-acid biosynthesis; L-methionine biosynthesis via salvage pathway; L-methionine from S-methyl-5-thio-alpha-D-ribose 1-phosphate: step 1/6.</text>
</comment>
<comment type="similarity">
    <text evidence="2">Belongs to the eIF-2B alpha/beta/delta subunits family. MtnA subfamily.</text>
</comment>
<evidence type="ECO:0000255" key="1">
    <source>
        <dbReference type="HAMAP-Rule" id="MF_01678"/>
    </source>
</evidence>
<evidence type="ECO:0000305" key="2"/>
<feature type="chain" id="PRO_1000187362" description="Methylthioribose-1-phosphate isomerase">
    <location>
        <begin position="1"/>
        <end position="365"/>
    </location>
</feature>
<feature type="active site" description="Proton donor" evidence="1">
    <location>
        <position position="242"/>
    </location>
</feature>
<feature type="binding site" evidence="1">
    <location>
        <begin position="53"/>
        <end position="55"/>
    </location>
    <ligand>
        <name>substrate</name>
    </ligand>
</feature>
<feature type="binding site" evidence="1">
    <location>
        <position position="90"/>
    </location>
    <ligand>
        <name>substrate</name>
    </ligand>
</feature>
<feature type="binding site" evidence="1">
    <location>
        <position position="201"/>
    </location>
    <ligand>
        <name>substrate</name>
    </ligand>
</feature>
<feature type="binding site" evidence="1">
    <location>
        <begin position="252"/>
        <end position="253"/>
    </location>
    <ligand>
        <name>substrate</name>
    </ligand>
</feature>
<feature type="site" description="Transition state stabilizer" evidence="1">
    <location>
        <position position="162"/>
    </location>
</feature>